<evidence type="ECO:0000255" key="1">
    <source>
        <dbReference type="HAMAP-Rule" id="MF_02108"/>
    </source>
</evidence>
<keyword id="KW-0119">Carbohydrate metabolism</keyword>
<keyword id="KW-0238">DNA-binding</keyword>
<keyword id="KW-0678">Repressor</keyword>
<keyword id="KW-0804">Transcription</keyword>
<keyword id="KW-0805">Transcription regulation</keyword>
<gene>
    <name evidence="1" type="primary">murR</name>
    <name type="ordered locus">EcHS_A2563</name>
</gene>
<sequence length="285" mass="31293">MLYLTKIRNAESEFTGNEQKIADFLRANVSELKSVSSRKMAKQLGISQSSIVKFAQKLGAQGFTELRMALIGEYSASREKTNATALHLHSSITSDDSLEVIARKLNREKELALEQTCALFDYARLQKIIEVISKAPFIQITGLGGSALVGRDLSFKLMKIGYRVACEADTHVQATVSQALKKGDVQIAISYSGSKKEIVLCAEAARKQGATVIAITSLADSPLRRLAHFTLDTVSGETEWRSSSMSTRTAQNSVTDLLFVGLVQLNDVESLKMIQRSSELTQRLK</sequence>
<comment type="function">
    <text evidence="1">Represses the expression of the murPQ operon involved in the uptake and degradation of N-acetylmuramic acid (MurNAc). Binds to two adjacent inverted repeats within the operator region. MurNAc 6-phosphate, the substrate of MurQ, is the specific inducer that weakens binding of MurR to the operator.</text>
</comment>
<comment type="pathway">
    <text>Amino-sugar metabolism; N-acetylmuramate degradation [regulation].</text>
</comment>
<comment type="subunit">
    <text evidence="1">Homotetramer.</text>
</comment>
<accession>A8A2S4</accession>
<dbReference type="EMBL" id="CP000802">
    <property type="protein sequence ID" value="ABV06828.1"/>
    <property type="molecule type" value="Genomic_DNA"/>
</dbReference>
<dbReference type="RefSeq" id="WP_000966453.1">
    <property type="nucleotide sequence ID" value="NC_009800.1"/>
</dbReference>
<dbReference type="SMR" id="A8A2S4"/>
<dbReference type="KEGG" id="ecx:EcHS_A2563"/>
<dbReference type="HOGENOM" id="CLU_055769_0_2_6"/>
<dbReference type="UniPathway" id="UPA00342"/>
<dbReference type="GO" id="GO:0097367">
    <property type="term" value="F:carbohydrate derivative binding"/>
    <property type="evidence" value="ECO:0007669"/>
    <property type="project" value="InterPro"/>
</dbReference>
<dbReference type="GO" id="GO:0003677">
    <property type="term" value="F:DNA binding"/>
    <property type="evidence" value="ECO:0007669"/>
    <property type="project" value="UniProtKB-KW"/>
</dbReference>
<dbReference type="GO" id="GO:0003700">
    <property type="term" value="F:DNA-binding transcription factor activity"/>
    <property type="evidence" value="ECO:0007669"/>
    <property type="project" value="UniProtKB-UniRule"/>
</dbReference>
<dbReference type="GO" id="GO:1901135">
    <property type="term" value="P:carbohydrate derivative metabolic process"/>
    <property type="evidence" value="ECO:0007669"/>
    <property type="project" value="InterPro"/>
</dbReference>
<dbReference type="GO" id="GO:0097173">
    <property type="term" value="P:N-acetylmuramic acid catabolic process"/>
    <property type="evidence" value="ECO:0007669"/>
    <property type="project" value="UniProtKB-UniPathway"/>
</dbReference>
<dbReference type="GO" id="GO:0045892">
    <property type="term" value="P:negative regulation of DNA-templated transcription"/>
    <property type="evidence" value="ECO:0007669"/>
    <property type="project" value="UniProtKB-UniRule"/>
</dbReference>
<dbReference type="GO" id="GO:0043470">
    <property type="term" value="P:regulation of carbohydrate catabolic process"/>
    <property type="evidence" value="ECO:0007669"/>
    <property type="project" value="UniProtKB-UniRule"/>
</dbReference>
<dbReference type="CDD" id="cd05013">
    <property type="entry name" value="SIS_RpiR"/>
    <property type="match status" value="1"/>
</dbReference>
<dbReference type="FunFam" id="3.40.50.10490:FF:000028">
    <property type="entry name" value="HTH-type transcriptional regulator MurR"/>
    <property type="match status" value="1"/>
</dbReference>
<dbReference type="Gene3D" id="3.40.50.10490">
    <property type="entry name" value="Glucose-6-phosphate isomerase like protein, domain 1"/>
    <property type="match status" value="1"/>
</dbReference>
<dbReference type="Gene3D" id="1.10.10.10">
    <property type="entry name" value="Winged helix-like DNA-binding domain superfamily/Winged helix DNA-binding domain"/>
    <property type="match status" value="1"/>
</dbReference>
<dbReference type="HAMAP" id="MF_02108">
    <property type="entry name" value="HTH_type_MurR"/>
    <property type="match status" value="1"/>
</dbReference>
<dbReference type="InterPro" id="IPR009057">
    <property type="entry name" value="Homeodomain-like_sf"/>
</dbReference>
<dbReference type="InterPro" id="IPR000281">
    <property type="entry name" value="HTH_RpiR"/>
</dbReference>
<dbReference type="InterPro" id="IPR047640">
    <property type="entry name" value="RpiR-like"/>
</dbReference>
<dbReference type="InterPro" id="IPR035472">
    <property type="entry name" value="RpiR-like_SIS"/>
</dbReference>
<dbReference type="InterPro" id="IPR001347">
    <property type="entry name" value="SIS_dom"/>
</dbReference>
<dbReference type="InterPro" id="IPR046348">
    <property type="entry name" value="SIS_dom_sf"/>
</dbReference>
<dbReference type="InterPro" id="IPR022821">
    <property type="entry name" value="Tscrpt_reg_HTH_MurR"/>
</dbReference>
<dbReference type="InterPro" id="IPR036388">
    <property type="entry name" value="WH-like_DNA-bd_sf"/>
</dbReference>
<dbReference type="NCBIfam" id="NF012026">
    <property type="entry name" value="PRK15482.1"/>
    <property type="match status" value="1"/>
</dbReference>
<dbReference type="PANTHER" id="PTHR30514">
    <property type="entry name" value="GLUCOKINASE"/>
    <property type="match status" value="1"/>
</dbReference>
<dbReference type="PANTHER" id="PTHR30514:SF17">
    <property type="entry name" value="HTH-TYPE TRANSCRIPTIONAL REGULATOR MURR"/>
    <property type="match status" value="1"/>
</dbReference>
<dbReference type="Pfam" id="PF01418">
    <property type="entry name" value="HTH_6"/>
    <property type="match status" value="1"/>
</dbReference>
<dbReference type="Pfam" id="PF01380">
    <property type="entry name" value="SIS"/>
    <property type="match status" value="1"/>
</dbReference>
<dbReference type="SUPFAM" id="SSF46689">
    <property type="entry name" value="Homeodomain-like"/>
    <property type="match status" value="1"/>
</dbReference>
<dbReference type="SUPFAM" id="SSF53697">
    <property type="entry name" value="SIS domain"/>
    <property type="match status" value="1"/>
</dbReference>
<dbReference type="PROSITE" id="PS51071">
    <property type="entry name" value="HTH_RPIR"/>
    <property type="match status" value="1"/>
</dbReference>
<dbReference type="PROSITE" id="PS51464">
    <property type="entry name" value="SIS"/>
    <property type="match status" value="1"/>
</dbReference>
<name>MURR_ECOHS</name>
<feature type="chain" id="PRO_0000387768" description="HTH-type transcriptional regulator MurR">
    <location>
        <begin position="1"/>
        <end position="285"/>
    </location>
</feature>
<feature type="domain" description="HTH rpiR-type" evidence="1">
    <location>
        <begin position="1"/>
        <end position="77"/>
    </location>
</feature>
<feature type="domain" description="SIS" evidence="1">
    <location>
        <begin position="128"/>
        <end position="268"/>
    </location>
</feature>
<feature type="DNA-binding region" description="H-T-H motif" evidence="1">
    <location>
        <begin position="37"/>
        <end position="56"/>
    </location>
</feature>
<protein>
    <recommendedName>
        <fullName evidence="1">HTH-type transcriptional regulator MurR</fullName>
    </recommendedName>
    <alternativeName>
        <fullName evidence="1">MurPQ operon repressor</fullName>
    </alternativeName>
</protein>
<reference key="1">
    <citation type="journal article" date="2008" name="J. Bacteriol.">
        <title>The pangenome structure of Escherichia coli: comparative genomic analysis of E. coli commensal and pathogenic isolates.</title>
        <authorList>
            <person name="Rasko D.A."/>
            <person name="Rosovitz M.J."/>
            <person name="Myers G.S.A."/>
            <person name="Mongodin E.F."/>
            <person name="Fricke W.F."/>
            <person name="Gajer P."/>
            <person name="Crabtree J."/>
            <person name="Sebaihia M."/>
            <person name="Thomson N.R."/>
            <person name="Chaudhuri R."/>
            <person name="Henderson I.R."/>
            <person name="Sperandio V."/>
            <person name="Ravel J."/>
        </authorList>
    </citation>
    <scope>NUCLEOTIDE SEQUENCE [LARGE SCALE GENOMIC DNA]</scope>
    <source>
        <strain>HS</strain>
    </source>
</reference>
<organism>
    <name type="scientific">Escherichia coli O9:H4 (strain HS)</name>
    <dbReference type="NCBI Taxonomy" id="331112"/>
    <lineage>
        <taxon>Bacteria</taxon>
        <taxon>Pseudomonadati</taxon>
        <taxon>Pseudomonadota</taxon>
        <taxon>Gammaproteobacteria</taxon>
        <taxon>Enterobacterales</taxon>
        <taxon>Enterobacteriaceae</taxon>
        <taxon>Escherichia</taxon>
    </lineage>
</organism>
<proteinExistence type="inferred from homology"/>